<reference key="1">
    <citation type="journal article" date="1994" name="Biol. Reprod.">
        <title>Connexin messenger ribonucleic acids in the ovary of Atlantic croaker: molecular cloning and characterization, hormonal control, and correlation with appearance of oocyte maturational competence.</title>
        <authorList>
            <person name="Yoshizaki G."/>
            <person name="Patino R."/>
            <person name="Thomas P."/>
        </authorList>
    </citation>
    <scope>NUCLEOTIDE SEQUENCE [MRNA]</scope>
    <source>
        <tissue>Ovary</tissue>
    </source>
</reference>
<name>CX32_MICUN</name>
<proteinExistence type="evidence at transcript level"/>
<sequence>MGDLGFLSKLLDQVQSHSTVIGKIWMTVLFLFRIMVLGAGAESVWGDEQSDFTCNTQQPGCENVCYDWTFPISHIRFWVLQIIFVSTPTLIYLGHAMHIIQQETKLRARLSSPGGSRLCKQPKYTNEQGKVKIKGNLLGSYLTQLVFKIIIEAAFIVGQYYLYGFIMVPMFPCSKKPCPFTVECYMSRPTEKTIFIIFMLVVACVSLLLNVIEVFYLICTRVRCGSRAHSHKITSAENPASLSSPRWPTVEDSLKQNKMNMELETSQSIGGSLDGAKEEKRLLSH</sequence>
<organism>
    <name type="scientific">Micropogonias undulatus</name>
    <name type="common">Atlantic croaker</name>
    <dbReference type="NCBI Taxonomy" id="29154"/>
    <lineage>
        <taxon>Eukaryota</taxon>
        <taxon>Metazoa</taxon>
        <taxon>Chordata</taxon>
        <taxon>Craniata</taxon>
        <taxon>Vertebrata</taxon>
        <taxon>Euteleostomi</taxon>
        <taxon>Actinopterygii</taxon>
        <taxon>Neopterygii</taxon>
        <taxon>Teleostei</taxon>
        <taxon>Neoteleostei</taxon>
        <taxon>Acanthomorphata</taxon>
        <taxon>Eupercaria</taxon>
        <taxon>Sciaenidae</taxon>
        <taxon>Micropogonias</taxon>
    </lineage>
</organism>
<accession>P51915</accession>
<feature type="initiator methionine" description="Removed" evidence="1">
    <location>
        <position position="1"/>
    </location>
</feature>
<feature type="chain" id="PRO_0000057877" description="Gap junction Cx32.2 protein">
    <location>
        <begin position="2"/>
        <end position="285"/>
    </location>
</feature>
<feature type="topological domain" description="Cytoplasmic" evidence="2">
    <location>
        <begin position="2"/>
        <end position="19"/>
    </location>
</feature>
<feature type="transmembrane region" description="Helical" evidence="2">
    <location>
        <begin position="20"/>
        <end position="40"/>
    </location>
</feature>
<feature type="topological domain" description="Extracellular" evidence="2">
    <location>
        <begin position="41"/>
        <end position="76"/>
    </location>
</feature>
<feature type="transmembrane region" description="Helical" evidence="2">
    <location>
        <begin position="77"/>
        <end position="99"/>
    </location>
</feature>
<feature type="topological domain" description="Cytoplasmic" evidence="2">
    <location>
        <begin position="100"/>
        <end position="148"/>
    </location>
</feature>
<feature type="transmembrane region" description="Helical" evidence="2">
    <location>
        <begin position="149"/>
        <end position="171"/>
    </location>
</feature>
<feature type="topological domain" description="Extracellular" evidence="2">
    <location>
        <begin position="172"/>
        <end position="194"/>
    </location>
</feature>
<feature type="transmembrane region" description="Helical" evidence="2">
    <location>
        <begin position="195"/>
        <end position="217"/>
    </location>
</feature>
<feature type="topological domain" description="Cytoplasmic" evidence="2">
    <location>
        <begin position="218"/>
        <end position="285"/>
    </location>
</feature>
<feature type="region of interest" description="Disordered" evidence="3">
    <location>
        <begin position="264"/>
        <end position="285"/>
    </location>
</feature>
<feature type="compositionally biased region" description="Basic and acidic residues" evidence="3">
    <location>
        <begin position="275"/>
        <end position="285"/>
    </location>
</feature>
<dbReference type="EMBL" id="L31542">
    <property type="protein sequence ID" value="AAA66969.1"/>
    <property type="molecule type" value="mRNA"/>
</dbReference>
<dbReference type="PIR" id="I50995">
    <property type="entry name" value="I50995"/>
</dbReference>
<dbReference type="SMR" id="P51915"/>
<dbReference type="GO" id="GO:0005922">
    <property type="term" value="C:connexin complex"/>
    <property type="evidence" value="ECO:0007669"/>
    <property type="project" value="InterPro"/>
</dbReference>
<dbReference type="GO" id="GO:0005243">
    <property type="term" value="F:gap junction channel activity"/>
    <property type="evidence" value="ECO:0007669"/>
    <property type="project" value="TreeGrafter"/>
</dbReference>
<dbReference type="GO" id="GO:0007267">
    <property type="term" value="P:cell-cell signaling"/>
    <property type="evidence" value="ECO:0007669"/>
    <property type="project" value="TreeGrafter"/>
</dbReference>
<dbReference type="FunFam" id="1.20.1440.80:FF:000001">
    <property type="entry name" value="Gap junction alpha-1"/>
    <property type="match status" value="1"/>
</dbReference>
<dbReference type="Gene3D" id="1.20.1440.80">
    <property type="entry name" value="Gap junction channel protein cysteine-rich domain"/>
    <property type="match status" value="1"/>
</dbReference>
<dbReference type="InterPro" id="IPR000500">
    <property type="entry name" value="Connexin"/>
</dbReference>
<dbReference type="InterPro" id="IPR019570">
    <property type="entry name" value="Connexin_CCC"/>
</dbReference>
<dbReference type="InterPro" id="IPR017990">
    <property type="entry name" value="Connexin_CS"/>
</dbReference>
<dbReference type="InterPro" id="IPR013092">
    <property type="entry name" value="Connexin_N"/>
</dbReference>
<dbReference type="InterPro" id="IPR038359">
    <property type="entry name" value="Connexin_N_sf"/>
</dbReference>
<dbReference type="PANTHER" id="PTHR11984">
    <property type="entry name" value="CONNEXIN"/>
    <property type="match status" value="1"/>
</dbReference>
<dbReference type="PANTHER" id="PTHR11984:SF109">
    <property type="entry name" value="CONNEXIN 28.1-RELATED"/>
    <property type="match status" value="1"/>
</dbReference>
<dbReference type="Pfam" id="PF00029">
    <property type="entry name" value="Connexin"/>
    <property type="match status" value="1"/>
</dbReference>
<dbReference type="PRINTS" id="PR00206">
    <property type="entry name" value="CONNEXIN"/>
</dbReference>
<dbReference type="SMART" id="SM00037">
    <property type="entry name" value="CNX"/>
    <property type="match status" value="1"/>
</dbReference>
<dbReference type="SMART" id="SM01089">
    <property type="entry name" value="Connexin_CCC"/>
    <property type="match status" value="1"/>
</dbReference>
<dbReference type="PROSITE" id="PS00407">
    <property type="entry name" value="CONNEXINS_1"/>
    <property type="match status" value="1"/>
</dbReference>
<dbReference type="PROSITE" id="PS00408">
    <property type="entry name" value="CONNEXINS_2"/>
    <property type="match status" value="1"/>
</dbReference>
<comment type="function">
    <text>One gap junction consists of a cluster of closely packed pairs of transmembrane channels, the connexons, through which materials of low MW diffuse from one cell to a neighboring cell. May be involved in ovarian follicular maturation.</text>
</comment>
<comment type="subunit">
    <text>A connexon is composed of a hexamer of connexins.</text>
</comment>
<comment type="subcellular location">
    <subcellularLocation>
        <location>Cell membrane</location>
        <topology>Multi-pass membrane protein</topology>
    </subcellularLocation>
    <subcellularLocation>
        <location>Cell junction</location>
        <location>Gap junction</location>
    </subcellularLocation>
</comment>
<comment type="induction">
    <text>In ovaries, hormonally induced at the onset of oocyte maturation.</text>
</comment>
<comment type="similarity">
    <text evidence="4">Belongs to the connexin family. Beta-type (group I) subfamily.</text>
</comment>
<keyword id="KW-0965">Cell junction</keyword>
<keyword id="KW-1003">Cell membrane</keyword>
<keyword id="KW-0303">Gap junction</keyword>
<keyword id="KW-0472">Membrane</keyword>
<keyword id="KW-0812">Transmembrane</keyword>
<keyword id="KW-1133">Transmembrane helix</keyword>
<evidence type="ECO:0000250" key="1"/>
<evidence type="ECO:0000255" key="2"/>
<evidence type="ECO:0000256" key="3">
    <source>
        <dbReference type="SAM" id="MobiDB-lite"/>
    </source>
</evidence>
<evidence type="ECO:0000305" key="4"/>
<protein>
    <recommendedName>
        <fullName>Gap junction Cx32.2 protein</fullName>
    </recommendedName>
    <alternativeName>
        <fullName>Connexin-32.2</fullName>
    </alternativeName>
</protein>